<name>RNZ_PHOV8</name>
<proteinExistence type="inferred from homology"/>
<keyword id="KW-0255">Endonuclease</keyword>
<keyword id="KW-0378">Hydrolase</keyword>
<keyword id="KW-0479">Metal-binding</keyword>
<keyword id="KW-0540">Nuclease</keyword>
<keyword id="KW-0819">tRNA processing</keyword>
<keyword id="KW-0862">Zinc</keyword>
<feature type="chain" id="PRO_1000070264" description="Ribonuclease Z">
    <location>
        <begin position="1"/>
        <end position="309"/>
    </location>
</feature>
<feature type="active site" description="Proton acceptor" evidence="1">
    <location>
        <position position="67"/>
    </location>
</feature>
<feature type="binding site" evidence="1">
    <location>
        <position position="63"/>
    </location>
    <ligand>
        <name>Zn(2+)</name>
        <dbReference type="ChEBI" id="CHEBI:29105"/>
        <label>1</label>
        <note>catalytic</note>
    </ligand>
</feature>
<feature type="binding site" evidence="1">
    <location>
        <position position="65"/>
    </location>
    <ligand>
        <name>Zn(2+)</name>
        <dbReference type="ChEBI" id="CHEBI:29105"/>
        <label>1</label>
        <note>catalytic</note>
    </ligand>
</feature>
<feature type="binding site" evidence="1">
    <location>
        <position position="67"/>
    </location>
    <ligand>
        <name>Zn(2+)</name>
        <dbReference type="ChEBI" id="CHEBI:29105"/>
        <label>2</label>
        <note>catalytic</note>
    </ligand>
</feature>
<feature type="binding site" evidence="1">
    <location>
        <position position="68"/>
    </location>
    <ligand>
        <name>Zn(2+)</name>
        <dbReference type="ChEBI" id="CHEBI:29105"/>
        <label>2</label>
        <note>catalytic</note>
    </ligand>
</feature>
<feature type="binding site" evidence="1">
    <location>
        <position position="143"/>
    </location>
    <ligand>
        <name>Zn(2+)</name>
        <dbReference type="ChEBI" id="CHEBI:29105"/>
        <label>1</label>
        <note>catalytic</note>
    </ligand>
</feature>
<feature type="binding site" evidence="1">
    <location>
        <position position="213"/>
    </location>
    <ligand>
        <name>Zn(2+)</name>
        <dbReference type="ChEBI" id="CHEBI:29105"/>
        <label>1</label>
        <note>catalytic</note>
    </ligand>
</feature>
<feature type="binding site" evidence="1">
    <location>
        <position position="213"/>
    </location>
    <ligand>
        <name>Zn(2+)</name>
        <dbReference type="ChEBI" id="CHEBI:29105"/>
        <label>2</label>
        <note>catalytic</note>
    </ligand>
</feature>
<feature type="binding site" evidence="1">
    <location>
        <position position="271"/>
    </location>
    <ligand>
        <name>Zn(2+)</name>
        <dbReference type="ChEBI" id="CHEBI:29105"/>
        <label>2</label>
        <note>catalytic</note>
    </ligand>
</feature>
<evidence type="ECO:0000255" key="1">
    <source>
        <dbReference type="HAMAP-Rule" id="MF_01818"/>
    </source>
</evidence>
<gene>
    <name evidence="1" type="primary">rnz</name>
    <name type="ordered locus">BVU_2582</name>
</gene>
<comment type="function">
    <text evidence="1">Zinc phosphodiesterase, which displays some tRNA 3'-processing endonuclease activity. Probably involved in tRNA maturation, by removing a 3'-trailer from precursor tRNA.</text>
</comment>
<comment type="catalytic activity">
    <reaction evidence="1">
        <text>Endonucleolytic cleavage of RNA, removing extra 3' nucleotides from tRNA precursor, generating 3' termini of tRNAs. A 3'-hydroxy group is left at the tRNA terminus and a 5'-phosphoryl group is left at the trailer molecule.</text>
        <dbReference type="EC" id="3.1.26.11"/>
    </reaction>
</comment>
<comment type="cofactor">
    <cofactor evidence="1">
        <name>Zn(2+)</name>
        <dbReference type="ChEBI" id="CHEBI:29105"/>
    </cofactor>
    <text evidence="1">Binds 2 Zn(2+) ions.</text>
</comment>
<comment type="subunit">
    <text evidence="1">Homodimer.</text>
</comment>
<comment type="similarity">
    <text evidence="1">Belongs to the RNase Z family.</text>
</comment>
<reference key="1">
    <citation type="journal article" date="2007" name="PLoS Biol.">
        <title>Evolution of symbiotic bacteria in the distal human intestine.</title>
        <authorList>
            <person name="Xu J."/>
            <person name="Mahowald M.A."/>
            <person name="Ley R.E."/>
            <person name="Lozupone C.A."/>
            <person name="Hamady M."/>
            <person name="Martens E.C."/>
            <person name="Henrissat B."/>
            <person name="Coutinho P.M."/>
            <person name="Minx P."/>
            <person name="Latreille P."/>
            <person name="Cordum H."/>
            <person name="Van Brunt A."/>
            <person name="Kim K."/>
            <person name="Fulton R.S."/>
            <person name="Fulton L.A."/>
            <person name="Clifton S.W."/>
            <person name="Wilson R.K."/>
            <person name="Knight R.D."/>
            <person name="Gordon J.I."/>
        </authorList>
    </citation>
    <scope>NUCLEOTIDE SEQUENCE [LARGE SCALE GENOMIC DNA]</scope>
    <source>
        <strain>ATCC 8482 / DSM 1447 / JCM 5826 / CCUG 4940 / NBRC 14291 / NCTC 11154</strain>
    </source>
</reference>
<protein>
    <recommendedName>
        <fullName evidence="1">Ribonuclease Z</fullName>
        <shortName evidence="1">RNase Z</shortName>
        <ecNumber evidence="1">3.1.26.11</ecNumber>
    </recommendedName>
    <alternativeName>
        <fullName evidence="1">tRNA 3 endonuclease</fullName>
    </alternativeName>
    <alternativeName>
        <fullName evidence="1">tRNase Z</fullName>
    </alternativeName>
</protein>
<accession>A6L3H3</accession>
<dbReference type="EC" id="3.1.26.11" evidence="1"/>
<dbReference type="EMBL" id="CP000139">
    <property type="protein sequence ID" value="ABR40237.1"/>
    <property type="molecule type" value="Genomic_DNA"/>
</dbReference>
<dbReference type="RefSeq" id="WP_011965653.1">
    <property type="nucleotide sequence ID" value="NZ_JANSWM010000107.1"/>
</dbReference>
<dbReference type="SMR" id="A6L3H3"/>
<dbReference type="STRING" id="435590.BVU_2582"/>
<dbReference type="PaxDb" id="435590-BVU_2582"/>
<dbReference type="GeneID" id="5303545"/>
<dbReference type="KEGG" id="bvu:BVU_2582"/>
<dbReference type="eggNOG" id="COG1234">
    <property type="taxonomic scope" value="Bacteria"/>
</dbReference>
<dbReference type="HOGENOM" id="CLU_031317_2_1_10"/>
<dbReference type="BioCyc" id="BVUL435590:G1G59-2685-MONOMER"/>
<dbReference type="Proteomes" id="UP000002861">
    <property type="component" value="Chromosome"/>
</dbReference>
<dbReference type="GO" id="GO:0042781">
    <property type="term" value="F:3'-tRNA processing endoribonuclease activity"/>
    <property type="evidence" value="ECO:0007669"/>
    <property type="project" value="UniProtKB-UniRule"/>
</dbReference>
<dbReference type="GO" id="GO:0008270">
    <property type="term" value="F:zinc ion binding"/>
    <property type="evidence" value="ECO:0007669"/>
    <property type="project" value="UniProtKB-UniRule"/>
</dbReference>
<dbReference type="CDD" id="cd07717">
    <property type="entry name" value="RNaseZ_ZiPD-like_MBL-fold"/>
    <property type="match status" value="1"/>
</dbReference>
<dbReference type="Gene3D" id="3.60.15.10">
    <property type="entry name" value="Ribonuclease Z/Hydroxyacylglutathione hydrolase-like"/>
    <property type="match status" value="1"/>
</dbReference>
<dbReference type="HAMAP" id="MF_01818">
    <property type="entry name" value="RNase_Z_BN"/>
    <property type="match status" value="1"/>
</dbReference>
<dbReference type="InterPro" id="IPR001279">
    <property type="entry name" value="Metallo-B-lactamas"/>
</dbReference>
<dbReference type="InterPro" id="IPR036866">
    <property type="entry name" value="RibonucZ/Hydroxyglut_hydro"/>
</dbReference>
<dbReference type="InterPro" id="IPR013471">
    <property type="entry name" value="RNase_Z/BN"/>
</dbReference>
<dbReference type="NCBIfam" id="NF000801">
    <property type="entry name" value="PRK00055.1-3"/>
    <property type="match status" value="1"/>
</dbReference>
<dbReference type="NCBIfam" id="TIGR02651">
    <property type="entry name" value="RNase_Z"/>
    <property type="match status" value="1"/>
</dbReference>
<dbReference type="PANTHER" id="PTHR46018">
    <property type="entry name" value="ZINC PHOSPHODIESTERASE ELAC PROTEIN 1"/>
    <property type="match status" value="1"/>
</dbReference>
<dbReference type="PANTHER" id="PTHR46018:SF2">
    <property type="entry name" value="ZINC PHOSPHODIESTERASE ELAC PROTEIN 1"/>
    <property type="match status" value="1"/>
</dbReference>
<dbReference type="Pfam" id="PF12706">
    <property type="entry name" value="Lactamase_B_2"/>
    <property type="match status" value="2"/>
</dbReference>
<dbReference type="SUPFAM" id="SSF56281">
    <property type="entry name" value="Metallo-hydrolase/oxidoreductase"/>
    <property type="match status" value="1"/>
</dbReference>
<organism>
    <name type="scientific">Phocaeicola vulgatus (strain ATCC 8482 / DSM 1447 / JCM 5826 / CCUG 4940 / NBRC 14291 / NCTC 11154)</name>
    <name type="common">Bacteroides vulgatus</name>
    <dbReference type="NCBI Taxonomy" id="435590"/>
    <lineage>
        <taxon>Bacteria</taxon>
        <taxon>Pseudomonadati</taxon>
        <taxon>Bacteroidota</taxon>
        <taxon>Bacteroidia</taxon>
        <taxon>Bacteroidales</taxon>
        <taxon>Bacteroidaceae</taxon>
        <taxon>Phocaeicola</taxon>
    </lineage>
</organism>
<sequence length="309" mass="35254">MEKFEVHILGCGSALPTTRHFATSQVVNIREKLFMIDCGEGAQMQLRKSKLKFTRLNHIFISHLHGDHCFGLMGLISTFGMLGRTATLYIHCHAELERLLTPQLDFFCKGMSYKVVFQTFDPGKAEIIYDDRSLTIETIPLRHRIPTCGFLFSEKQIPAHIRRDMIDFYEIPVYELNRIKNGADYTLPDGKIVPNNKLTIPSALPRRYAYCSDTIYLPHIIEQIYGVDLLFHEATFAQSEQARAKETFHTTASQAGEIARTAKVKQLLIGHFSARYEDESILLQEASDIFPNTLLARETLKISIESIKP</sequence>